<keyword id="KW-0002">3D-structure</keyword>
<keyword id="KW-0007">Acetylation</keyword>
<keyword id="KW-0963">Cytoplasm</keyword>
<keyword id="KW-1017">Isopeptide bond</keyword>
<keyword id="KW-0507">mRNA processing</keyword>
<keyword id="KW-0508">mRNA splicing</keyword>
<keyword id="KW-0539">Nucleus</keyword>
<keyword id="KW-1185">Reference proteome</keyword>
<keyword id="KW-0678">Repressor</keyword>
<keyword id="KW-0804">Transcription</keyword>
<keyword id="KW-0805">Transcription regulation</keyword>
<keyword id="KW-0832">Ubl conjugation</keyword>
<sequence>MAVESRVTQEEIKKEPEKPIDREKTCPLLLRVFTTNNGRHHRMDEFSRGNVPSSELQIYTWMDATLKELTSLVKEVYPEARKKGTHFNFAIVFMDLKRPGYRVKEIGSTMSGRKGTDDSMTLQSQKFQIGDYLDIAITPPNRAPPSSGRMRPY</sequence>
<evidence type="ECO:0000250" key="1"/>
<evidence type="ECO:0000250" key="2">
    <source>
        <dbReference type="UniProtKB" id="O00422"/>
    </source>
</evidence>
<evidence type="ECO:0000256" key="3">
    <source>
        <dbReference type="SAM" id="MobiDB-lite"/>
    </source>
</evidence>
<evidence type="ECO:0000269" key="4">
    <source>
    </source>
</evidence>
<evidence type="ECO:0000269" key="5">
    <source>
    </source>
</evidence>
<evidence type="ECO:0000305" key="6"/>
<evidence type="ECO:0007829" key="7">
    <source>
        <dbReference type="PDB" id="4A6Q"/>
    </source>
</evidence>
<evidence type="ECO:0007829" key="8">
    <source>
        <dbReference type="PDB" id="4A8X"/>
    </source>
</evidence>
<name>SAP18_MOUSE</name>
<protein>
    <recommendedName>
        <fullName>Histone deacetylase complex subunit SAP18</fullName>
    </recommendedName>
    <alternativeName>
        <fullName>18 kDa Sin3-associated polypeptide</fullName>
    </alternativeName>
    <alternativeName>
        <fullName>Sin3-associated polypeptide p18</fullName>
    </alternativeName>
</protein>
<organism>
    <name type="scientific">Mus musculus</name>
    <name type="common">Mouse</name>
    <dbReference type="NCBI Taxonomy" id="10090"/>
    <lineage>
        <taxon>Eukaryota</taxon>
        <taxon>Metazoa</taxon>
        <taxon>Chordata</taxon>
        <taxon>Craniata</taxon>
        <taxon>Vertebrata</taxon>
        <taxon>Euteleostomi</taxon>
        <taxon>Mammalia</taxon>
        <taxon>Eutheria</taxon>
        <taxon>Euarchontoglires</taxon>
        <taxon>Glires</taxon>
        <taxon>Rodentia</taxon>
        <taxon>Myomorpha</taxon>
        <taxon>Muroidea</taxon>
        <taxon>Muridae</taxon>
        <taxon>Murinae</taxon>
        <taxon>Mus</taxon>
        <taxon>Mus</taxon>
    </lineage>
</organism>
<feature type="initiator methionine" description="Removed" evidence="2">
    <location>
        <position position="1"/>
    </location>
</feature>
<feature type="chain" id="PRO_0000220976" description="Histone deacetylase complex subunit SAP18">
    <location>
        <begin position="2"/>
        <end position="153"/>
    </location>
</feature>
<feature type="region of interest" description="Disordered" evidence="3">
    <location>
        <begin position="1"/>
        <end position="20"/>
    </location>
</feature>
<feature type="region of interest" description="Involved in splicing regulation activity" evidence="1">
    <location>
        <begin position="93"/>
        <end position="153"/>
    </location>
</feature>
<feature type="compositionally biased region" description="Basic and acidic residues" evidence="3">
    <location>
        <begin position="7"/>
        <end position="20"/>
    </location>
</feature>
<feature type="modified residue" description="N-acetylalanine" evidence="2">
    <location>
        <position position="2"/>
    </location>
</feature>
<feature type="cross-link" description="Glycyl lysine isopeptide (Lys-Gly) (interchain with G-Cter in SUMO2)" evidence="2">
    <location>
        <position position="13"/>
    </location>
</feature>
<feature type="mutagenesis site" description="Impairs interactions with RNPS1, ACIN1 and PNN; reduces ASAP and PSAP complex assemblies." evidence="4">
    <original>C</original>
    <variation>R</variation>
    <location>
        <position position="26"/>
    </location>
</feature>
<feature type="helix" evidence="7">
    <location>
        <begin position="9"/>
        <end position="11"/>
    </location>
</feature>
<feature type="helix" evidence="7">
    <location>
        <begin position="22"/>
        <end position="24"/>
    </location>
</feature>
<feature type="strand" evidence="7">
    <location>
        <begin position="28"/>
        <end position="39"/>
    </location>
</feature>
<feature type="helix" evidence="7">
    <location>
        <begin position="43"/>
        <end position="46"/>
    </location>
</feature>
<feature type="helix" evidence="8">
    <location>
        <begin position="47"/>
        <end position="49"/>
    </location>
</feature>
<feature type="strand" evidence="7">
    <location>
        <begin position="56"/>
        <end position="60"/>
    </location>
</feature>
<feature type="helix" evidence="7">
    <location>
        <begin position="66"/>
        <end position="76"/>
    </location>
</feature>
<feature type="helix" evidence="7">
    <location>
        <begin position="78"/>
        <end position="81"/>
    </location>
</feature>
<feature type="strand" evidence="7">
    <location>
        <begin position="86"/>
        <end position="94"/>
    </location>
</feature>
<feature type="strand" evidence="7">
    <location>
        <begin position="96"/>
        <end position="110"/>
    </location>
</feature>
<feature type="turn" evidence="7">
    <location>
        <begin position="116"/>
        <end position="119"/>
    </location>
</feature>
<feature type="helix" evidence="7">
    <location>
        <begin position="123"/>
        <end position="125"/>
    </location>
</feature>
<feature type="strand" evidence="7">
    <location>
        <begin position="132"/>
        <end position="138"/>
    </location>
</feature>
<feature type="helix" evidence="7">
    <location>
        <begin position="140"/>
        <end position="142"/>
    </location>
</feature>
<reference key="1">
    <citation type="journal article" date="1998" name="Gene">
        <title>Cloning of the murine transcriptional corepressor component SAP18 and differential expression of its mRNA in the hematopoietic hierarchy.</title>
        <authorList>
            <person name="Boehmelt G."/>
            <person name="Antonio L."/>
            <person name="Iscove N.N."/>
        </authorList>
    </citation>
    <scope>NUCLEOTIDE SEQUENCE [MRNA]</scope>
    <scope>TISSUE SPECIFICITY</scope>
    <source>
        <strain>C57BL/6J</strain>
        <tissue>Spleen</tissue>
    </source>
</reference>
<reference key="2">
    <citation type="journal article" date="2005" name="Science">
        <title>The transcriptional landscape of the mammalian genome.</title>
        <authorList>
            <person name="Carninci P."/>
            <person name="Kasukawa T."/>
            <person name="Katayama S."/>
            <person name="Gough J."/>
            <person name="Frith M.C."/>
            <person name="Maeda N."/>
            <person name="Oyama R."/>
            <person name="Ravasi T."/>
            <person name="Lenhard B."/>
            <person name="Wells C."/>
            <person name="Kodzius R."/>
            <person name="Shimokawa K."/>
            <person name="Bajic V.B."/>
            <person name="Brenner S.E."/>
            <person name="Batalov S."/>
            <person name="Forrest A.R."/>
            <person name="Zavolan M."/>
            <person name="Davis M.J."/>
            <person name="Wilming L.G."/>
            <person name="Aidinis V."/>
            <person name="Allen J.E."/>
            <person name="Ambesi-Impiombato A."/>
            <person name="Apweiler R."/>
            <person name="Aturaliya R.N."/>
            <person name="Bailey T.L."/>
            <person name="Bansal M."/>
            <person name="Baxter L."/>
            <person name="Beisel K.W."/>
            <person name="Bersano T."/>
            <person name="Bono H."/>
            <person name="Chalk A.M."/>
            <person name="Chiu K.P."/>
            <person name="Choudhary V."/>
            <person name="Christoffels A."/>
            <person name="Clutterbuck D.R."/>
            <person name="Crowe M.L."/>
            <person name="Dalla E."/>
            <person name="Dalrymple B.P."/>
            <person name="de Bono B."/>
            <person name="Della Gatta G."/>
            <person name="di Bernardo D."/>
            <person name="Down T."/>
            <person name="Engstrom P."/>
            <person name="Fagiolini M."/>
            <person name="Faulkner G."/>
            <person name="Fletcher C.F."/>
            <person name="Fukushima T."/>
            <person name="Furuno M."/>
            <person name="Futaki S."/>
            <person name="Gariboldi M."/>
            <person name="Georgii-Hemming P."/>
            <person name="Gingeras T.R."/>
            <person name="Gojobori T."/>
            <person name="Green R.E."/>
            <person name="Gustincich S."/>
            <person name="Harbers M."/>
            <person name="Hayashi Y."/>
            <person name="Hensch T.K."/>
            <person name="Hirokawa N."/>
            <person name="Hill D."/>
            <person name="Huminiecki L."/>
            <person name="Iacono M."/>
            <person name="Ikeo K."/>
            <person name="Iwama A."/>
            <person name="Ishikawa T."/>
            <person name="Jakt M."/>
            <person name="Kanapin A."/>
            <person name="Katoh M."/>
            <person name="Kawasawa Y."/>
            <person name="Kelso J."/>
            <person name="Kitamura H."/>
            <person name="Kitano H."/>
            <person name="Kollias G."/>
            <person name="Krishnan S.P."/>
            <person name="Kruger A."/>
            <person name="Kummerfeld S.K."/>
            <person name="Kurochkin I.V."/>
            <person name="Lareau L.F."/>
            <person name="Lazarevic D."/>
            <person name="Lipovich L."/>
            <person name="Liu J."/>
            <person name="Liuni S."/>
            <person name="McWilliam S."/>
            <person name="Madan Babu M."/>
            <person name="Madera M."/>
            <person name="Marchionni L."/>
            <person name="Matsuda H."/>
            <person name="Matsuzawa S."/>
            <person name="Miki H."/>
            <person name="Mignone F."/>
            <person name="Miyake S."/>
            <person name="Morris K."/>
            <person name="Mottagui-Tabar S."/>
            <person name="Mulder N."/>
            <person name="Nakano N."/>
            <person name="Nakauchi H."/>
            <person name="Ng P."/>
            <person name="Nilsson R."/>
            <person name="Nishiguchi S."/>
            <person name="Nishikawa S."/>
            <person name="Nori F."/>
            <person name="Ohara O."/>
            <person name="Okazaki Y."/>
            <person name="Orlando V."/>
            <person name="Pang K.C."/>
            <person name="Pavan W.J."/>
            <person name="Pavesi G."/>
            <person name="Pesole G."/>
            <person name="Petrovsky N."/>
            <person name="Piazza S."/>
            <person name="Reed J."/>
            <person name="Reid J.F."/>
            <person name="Ring B.Z."/>
            <person name="Ringwald M."/>
            <person name="Rost B."/>
            <person name="Ruan Y."/>
            <person name="Salzberg S.L."/>
            <person name="Sandelin A."/>
            <person name="Schneider C."/>
            <person name="Schoenbach C."/>
            <person name="Sekiguchi K."/>
            <person name="Semple C.A."/>
            <person name="Seno S."/>
            <person name="Sessa L."/>
            <person name="Sheng Y."/>
            <person name="Shibata Y."/>
            <person name="Shimada H."/>
            <person name="Shimada K."/>
            <person name="Silva D."/>
            <person name="Sinclair B."/>
            <person name="Sperling S."/>
            <person name="Stupka E."/>
            <person name="Sugiura K."/>
            <person name="Sultana R."/>
            <person name="Takenaka Y."/>
            <person name="Taki K."/>
            <person name="Tammoja K."/>
            <person name="Tan S.L."/>
            <person name="Tang S."/>
            <person name="Taylor M.S."/>
            <person name="Tegner J."/>
            <person name="Teichmann S.A."/>
            <person name="Ueda H.R."/>
            <person name="van Nimwegen E."/>
            <person name="Verardo R."/>
            <person name="Wei C.L."/>
            <person name="Yagi K."/>
            <person name="Yamanishi H."/>
            <person name="Zabarovsky E."/>
            <person name="Zhu S."/>
            <person name="Zimmer A."/>
            <person name="Hide W."/>
            <person name="Bult C."/>
            <person name="Grimmond S.M."/>
            <person name="Teasdale R.D."/>
            <person name="Liu E.T."/>
            <person name="Brusic V."/>
            <person name="Quackenbush J."/>
            <person name="Wahlestedt C."/>
            <person name="Mattick J.S."/>
            <person name="Hume D.A."/>
            <person name="Kai C."/>
            <person name="Sasaki D."/>
            <person name="Tomaru Y."/>
            <person name="Fukuda S."/>
            <person name="Kanamori-Katayama M."/>
            <person name="Suzuki M."/>
            <person name="Aoki J."/>
            <person name="Arakawa T."/>
            <person name="Iida J."/>
            <person name="Imamura K."/>
            <person name="Itoh M."/>
            <person name="Kato T."/>
            <person name="Kawaji H."/>
            <person name="Kawagashira N."/>
            <person name="Kawashima T."/>
            <person name="Kojima M."/>
            <person name="Kondo S."/>
            <person name="Konno H."/>
            <person name="Nakano K."/>
            <person name="Ninomiya N."/>
            <person name="Nishio T."/>
            <person name="Okada M."/>
            <person name="Plessy C."/>
            <person name="Shibata K."/>
            <person name="Shiraki T."/>
            <person name="Suzuki S."/>
            <person name="Tagami M."/>
            <person name="Waki K."/>
            <person name="Watahiki A."/>
            <person name="Okamura-Oho Y."/>
            <person name="Suzuki H."/>
            <person name="Kawai J."/>
            <person name="Hayashizaki Y."/>
        </authorList>
    </citation>
    <scope>NUCLEOTIDE SEQUENCE [LARGE SCALE MRNA]</scope>
    <source>
        <strain>C57BL/6J</strain>
        <tissue>Cerebellum</tissue>
        <tissue>Heart</tissue>
        <tissue>Testis</tissue>
    </source>
</reference>
<reference key="3">
    <citation type="journal article" date="2004" name="Genome Res.">
        <title>The status, quality, and expansion of the NIH full-length cDNA project: the Mammalian Gene Collection (MGC).</title>
        <authorList>
            <consortium name="The MGC Project Team"/>
        </authorList>
    </citation>
    <scope>NUCLEOTIDE SEQUENCE [LARGE SCALE MRNA]</scope>
    <source>
        <strain>FVB/N</strain>
        <tissue>Mammary gland</tissue>
    </source>
</reference>
<reference key="4">
    <citation type="journal article" date="2010" name="Cell">
        <title>A tissue-specific atlas of mouse protein phosphorylation and expression.</title>
        <authorList>
            <person name="Huttlin E.L."/>
            <person name="Jedrychowski M.P."/>
            <person name="Elias J.E."/>
            <person name="Goswami T."/>
            <person name="Rad R."/>
            <person name="Beausoleil S.A."/>
            <person name="Villen J."/>
            <person name="Haas W."/>
            <person name="Sowa M.E."/>
            <person name="Gygi S.P."/>
        </authorList>
    </citation>
    <scope>IDENTIFICATION BY MASS SPECTROMETRY [LARGE SCALE ANALYSIS]</scope>
    <source>
        <tissue>Spleen</tissue>
        <tissue>Testis</tissue>
    </source>
</reference>
<reference key="5">
    <citation type="journal article" date="2012" name="Nat. Struct. Mol. Biol.">
        <title>The structure of the ASAP core complex reveals the existence of a Pinin-containing PSAP complex.</title>
        <authorList>
            <person name="Murachelli A.G."/>
            <person name="Ebert J."/>
            <person name="Basquin C."/>
            <person name="Le Hir H."/>
            <person name="Conti E."/>
        </authorList>
    </citation>
    <scope>X-RAY CRYSTALLOGRAPHY (1.5 ANGSTROMS) OF THE ASAP COMPLEX</scope>
    <scope>X-RAY CRYSTALLOGRAPHY (1.9 ANGSTROMS) OF 1-143</scope>
    <scope>FUNCTION OF THE ASAP COMPLEX</scope>
    <scope>IDENTIFICATION IN THE PSAP COMPLEX</scope>
    <scope>FUNCTION OF THE PSAP COMPLEX</scope>
    <scope>INTERACTION WITH RNPS1</scope>
    <scope>ACIN1 AND PNN</scope>
    <scope>MUTAGENESIS OF CYS-26</scope>
</reference>
<gene>
    <name type="primary">Sap18</name>
</gene>
<accession>O55128</accession>
<accession>Q545L4</accession>
<proteinExistence type="evidence at protein level"/>
<dbReference type="EMBL" id="Z97062">
    <property type="protein sequence ID" value="CAB09797.1"/>
    <property type="molecule type" value="mRNA"/>
</dbReference>
<dbReference type="EMBL" id="AK005189">
    <property type="protein sequence ID" value="BAB23871.1"/>
    <property type="molecule type" value="mRNA"/>
</dbReference>
<dbReference type="EMBL" id="AK006647">
    <property type="protein sequence ID" value="BAB24687.1"/>
    <property type="molecule type" value="mRNA"/>
</dbReference>
<dbReference type="EMBL" id="AK085992">
    <property type="protein sequence ID" value="BAC39588.1"/>
    <property type="molecule type" value="mRNA"/>
</dbReference>
<dbReference type="EMBL" id="BC006625">
    <property type="protein sequence ID" value="AAH06625.1"/>
    <property type="molecule type" value="mRNA"/>
</dbReference>
<dbReference type="RefSeq" id="NP_033145.2">
    <property type="nucleotide sequence ID" value="NM_009119.3"/>
</dbReference>
<dbReference type="PDB" id="4A6Q">
    <property type="method" value="X-ray"/>
    <property type="resolution" value="1.50 A"/>
    <property type="chains" value="A=6-143"/>
</dbReference>
<dbReference type="PDB" id="4A8X">
    <property type="method" value="X-ray"/>
    <property type="resolution" value="1.90 A"/>
    <property type="chains" value="C=14-143"/>
</dbReference>
<dbReference type="PDB" id="4A90">
    <property type="method" value="X-ray"/>
    <property type="resolution" value="1.90 A"/>
    <property type="chains" value="A/B=1-143"/>
</dbReference>
<dbReference type="PDBsum" id="4A6Q"/>
<dbReference type="PDBsum" id="4A8X"/>
<dbReference type="PDBsum" id="4A90"/>
<dbReference type="BMRB" id="O55128"/>
<dbReference type="SMR" id="O55128"/>
<dbReference type="BioGRID" id="203070">
    <property type="interactions" value="21"/>
</dbReference>
<dbReference type="DIP" id="DIP-59924N"/>
<dbReference type="FunCoup" id="O55128">
    <property type="interactions" value="3524"/>
</dbReference>
<dbReference type="IntAct" id="O55128">
    <property type="interactions" value="7"/>
</dbReference>
<dbReference type="STRING" id="10090.ENSMUSP00000073697"/>
<dbReference type="GlyGen" id="O55128">
    <property type="glycosylation" value="1 site"/>
</dbReference>
<dbReference type="iPTMnet" id="O55128"/>
<dbReference type="PhosphoSitePlus" id="O55128"/>
<dbReference type="PaxDb" id="10090-ENSMUSP00000073697"/>
<dbReference type="PeptideAtlas" id="O55128"/>
<dbReference type="ProteomicsDB" id="256916"/>
<dbReference type="Pumba" id="O55128"/>
<dbReference type="DNASU" id="20220"/>
<dbReference type="GeneID" id="20220"/>
<dbReference type="KEGG" id="mmu:20220"/>
<dbReference type="AGR" id="MGI:1277978"/>
<dbReference type="CTD" id="10284"/>
<dbReference type="MGI" id="MGI:1277978">
    <property type="gene designation" value="Sap18"/>
</dbReference>
<dbReference type="eggNOG" id="KOG3391">
    <property type="taxonomic scope" value="Eukaryota"/>
</dbReference>
<dbReference type="InParanoid" id="O55128"/>
<dbReference type="OrthoDB" id="440566at2759"/>
<dbReference type="PhylomeDB" id="O55128"/>
<dbReference type="Reactome" id="R-MMU-3214815">
    <property type="pathway name" value="HDACs deacetylate histones"/>
</dbReference>
<dbReference type="Reactome" id="R-MMU-72163">
    <property type="pathway name" value="mRNA Splicing - Major Pathway"/>
</dbReference>
<dbReference type="BioGRID-ORCS" id="20220">
    <property type="hits" value="24 hits in 84 CRISPR screens"/>
</dbReference>
<dbReference type="EvolutionaryTrace" id="O55128"/>
<dbReference type="PRO" id="PR:O55128"/>
<dbReference type="Proteomes" id="UP000000589">
    <property type="component" value="Unplaced"/>
</dbReference>
<dbReference type="RNAct" id="O55128">
    <property type="molecule type" value="protein"/>
</dbReference>
<dbReference type="GO" id="GO:0061574">
    <property type="term" value="C:ASAP complex"/>
    <property type="evidence" value="ECO:0000250"/>
    <property type="project" value="UniProtKB"/>
</dbReference>
<dbReference type="GO" id="GO:0005737">
    <property type="term" value="C:cytoplasm"/>
    <property type="evidence" value="ECO:0007669"/>
    <property type="project" value="UniProtKB-SubCell"/>
</dbReference>
<dbReference type="GO" id="GO:0000118">
    <property type="term" value="C:histone deacetylase complex"/>
    <property type="evidence" value="ECO:0000266"/>
    <property type="project" value="MGI"/>
</dbReference>
<dbReference type="GO" id="GO:0016607">
    <property type="term" value="C:nuclear speck"/>
    <property type="evidence" value="ECO:0000250"/>
    <property type="project" value="UniProtKB"/>
</dbReference>
<dbReference type="GO" id="GO:0005654">
    <property type="term" value="C:nucleoplasm"/>
    <property type="evidence" value="ECO:0000304"/>
    <property type="project" value="Reactome"/>
</dbReference>
<dbReference type="GO" id="GO:0005667">
    <property type="term" value="C:transcription regulator complex"/>
    <property type="evidence" value="ECO:0000266"/>
    <property type="project" value="MGI"/>
</dbReference>
<dbReference type="GO" id="GO:0003714">
    <property type="term" value="F:transcription corepressor activity"/>
    <property type="evidence" value="ECO:0007669"/>
    <property type="project" value="InterPro"/>
</dbReference>
<dbReference type="GO" id="GO:0006397">
    <property type="term" value="P:mRNA processing"/>
    <property type="evidence" value="ECO:0007669"/>
    <property type="project" value="UniProtKB-KW"/>
</dbReference>
<dbReference type="GO" id="GO:0048025">
    <property type="term" value="P:negative regulation of mRNA splicing, via spliceosome"/>
    <property type="evidence" value="ECO:0000250"/>
    <property type="project" value="UniProtKB"/>
</dbReference>
<dbReference type="GO" id="GO:0043065">
    <property type="term" value="P:positive regulation of apoptotic process"/>
    <property type="evidence" value="ECO:0000250"/>
    <property type="project" value="UniProtKB"/>
</dbReference>
<dbReference type="GO" id="GO:0000381">
    <property type="term" value="P:regulation of alternative mRNA splicing, via spliceosome"/>
    <property type="evidence" value="ECO:0000250"/>
    <property type="project" value="UniProtKB"/>
</dbReference>
<dbReference type="GO" id="GO:0006355">
    <property type="term" value="P:regulation of DNA-templated transcription"/>
    <property type="evidence" value="ECO:0000266"/>
    <property type="project" value="MGI"/>
</dbReference>
<dbReference type="GO" id="GO:0008380">
    <property type="term" value="P:RNA splicing"/>
    <property type="evidence" value="ECO:0007669"/>
    <property type="project" value="UniProtKB-KW"/>
</dbReference>
<dbReference type="FunFam" id="3.10.20.550:FF:000001">
    <property type="entry name" value="Histone deacetylase complex subunit SAP18"/>
    <property type="match status" value="1"/>
</dbReference>
<dbReference type="Gene3D" id="3.10.20.550">
    <property type="entry name" value="ASAP complex, SAP18 subunit"/>
    <property type="match status" value="1"/>
</dbReference>
<dbReference type="InterPro" id="IPR017250">
    <property type="entry name" value="Hist_deAcase_cplx_SAP18"/>
</dbReference>
<dbReference type="InterPro" id="IPR010516">
    <property type="entry name" value="SAP18"/>
</dbReference>
<dbReference type="InterPro" id="IPR042534">
    <property type="entry name" value="SAP18_sf"/>
</dbReference>
<dbReference type="PANTHER" id="PTHR13082:SF0">
    <property type="entry name" value="HISTONE DEACETYLASE COMPLEX SUBUNIT SAP18"/>
    <property type="match status" value="1"/>
</dbReference>
<dbReference type="PANTHER" id="PTHR13082">
    <property type="entry name" value="SAP18"/>
    <property type="match status" value="1"/>
</dbReference>
<dbReference type="Pfam" id="PF06487">
    <property type="entry name" value="SAP18"/>
    <property type="match status" value="1"/>
</dbReference>
<dbReference type="PIRSF" id="PIRSF037637">
    <property type="entry name" value="HDAC_SAP18"/>
    <property type="match status" value="1"/>
</dbReference>
<comment type="function">
    <text evidence="1 4">Component of the SIN3-repressing complex. Enhances the ability of SIN3-HDAC1-mediated transcriptional repression. When tethered to the promoter, it can direct the formation of a repressive complex to core histone proteins. Auxiliary component of the splicing-dependent multiprotein exon junction complex (EJC) deposited at splice junction on mRNAs. The EJC is a dynamic structure consisting of core proteins and several peripheral nuclear and cytoplasmic associated factors that join the complex only transiently either during EJC assembly or during subsequent mRNA metabolism. Component of the ASAP and PSAP complexes which bind RNA in a sequence-independent manner and are proposed to be recruited to the EJC prior to or during the splicing process and to regulate specific excision of introns in specific transcription subsets. The ASAP complex can inhibit mRNA processing during in vitro splicing reactions. The ASAP complex promotes apoptosis and is disassembled after induction of apoptosis. Involved in the splicing modulation of BCL2L1/Bcl-X (and probably other apoptotic genes); specifically inhibits the formation of proapoptotic isoforms such as Bcl-X(S); the activity is different from the established EJC assembly and function (By similarity).</text>
</comment>
<comment type="subunit">
    <text evidence="4">Found in a mRNA splicing-dependent exon junction complex (EJC). Component of the heterotrimeric ASAP (apoptosis- and splicing-associated protein) and PSAP complexes consisting of RNPS1, SAP18 and either ACIN1 or PNN, respectively; the ASAP and PSAP complexes probably are formed mutually exclusive. For the ASAP complex, the association of SAP18 seems to require a preformed RNPS1:ACIN1 complex. Forms a complex with SIN3A and HDAC1. Interacts with SUFU.</text>
</comment>
<comment type="interaction">
    <interactant intactId="EBI-3508332">
        <id>O55128</id>
    </interactant>
    <interactant intactId="EBI-3508336">
        <id>Q9Z0P7</id>
        <label>Sufu</label>
    </interactant>
    <organismsDiffer>false</organismsDiffer>
    <experiments>6</experiments>
</comment>
<comment type="subcellular location">
    <subcellularLocation>
        <location evidence="2">Nucleus</location>
    </subcellularLocation>
    <subcellularLocation>
        <location evidence="2">Cytoplasm</location>
    </subcellularLocation>
    <subcellularLocation>
        <location evidence="2">Nucleus speckle</location>
    </subcellularLocation>
    <text evidence="2">Shuttles between the nucleus and the cytoplasm (By similarity). Colocalizes with ACIN1 and SRSF2 in nuclear speckles (By similarity).</text>
</comment>
<comment type="tissue specificity">
    <text evidence="5">Expressed in all tissues tested; highest levels in the brain, kidney and muscle; lowest levels in lung spleen, liver, intestine and testis, and moderate levels in salivary gland and heart.</text>
</comment>
<comment type="similarity">
    <text evidence="6">Belongs to the SAP18 family.</text>
</comment>